<keyword id="KW-0131">Cell cycle</keyword>
<keyword id="KW-0132">Cell division</keyword>
<keyword id="KW-0137">Centromere</keyword>
<keyword id="KW-0158">Chromosome</keyword>
<keyword id="KW-0995">Kinetochore</keyword>
<keyword id="KW-0498">Mitosis</keyword>
<keyword id="KW-0539">Nucleus</keyword>
<keyword id="KW-1185">Reference proteome</keyword>
<sequence length="441" mass="49666">MENNSHNVDERRAARMRGAERYKIQNVEFSLDQNLLANLESSTSSSTRSSPASNQQNLEIVSQSEAYHKISDLDDSTSIFSISDQENILERRISEEVVRENSVSSIENVSSSAVARETQSSANILVKDNHFFSHKQKKIQRESIPFHKRDNIETSDAYSSSILENSPPNKVQRLSSLDSSQDSFQEEHPGNVTGTTFSSQAPEERIASPISTSSPESLTNQSSSLQSSLQTSSMAPRNLLDQSTEKDIVVGASDELVRIELTKLSKEAGGSKTLNELDAVQQFFQEFIKENEPLEPYVVKVKNAFVEQVSIRLLELIDLLDANRILSTACKKAANEKLAVQRDLSKLREDRLSVQRKKIQLRNEYIKLSHQQNFLDDIDDFFSQCETVKNELENVTTTPNSTEAFSEINEYASALSKNYGLESQLVELQSLLTQFYQKFLS</sequence>
<organism>
    <name type="scientific">Schizosaccharomyces pombe (strain 972 / ATCC 24843)</name>
    <name type="common">Fission yeast</name>
    <dbReference type="NCBI Taxonomy" id="284812"/>
    <lineage>
        <taxon>Eukaryota</taxon>
        <taxon>Fungi</taxon>
        <taxon>Dikarya</taxon>
        <taxon>Ascomycota</taxon>
        <taxon>Taphrinomycotina</taxon>
        <taxon>Schizosaccharomycetes</taxon>
        <taxon>Schizosaccharomycetales</taxon>
        <taxon>Schizosaccharomycetaceae</taxon>
        <taxon>Schizosaccharomyces</taxon>
    </lineage>
</organism>
<name>CENPU_SCHPO</name>
<evidence type="ECO:0000250" key="1">
    <source>
        <dbReference type="UniProtKB" id="P38313"/>
    </source>
</evidence>
<evidence type="ECO:0000256" key="2">
    <source>
        <dbReference type="SAM" id="MobiDB-lite"/>
    </source>
</evidence>
<evidence type="ECO:0000269" key="3">
    <source>
    </source>
</evidence>
<evidence type="ECO:0000269" key="4">
    <source>
    </source>
</evidence>
<evidence type="ECO:0000305" key="5"/>
<proteinExistence type="evidence at protein level"/>
<accession>O94643</accession>
<reference key="1">
    <citation type="journal article" date="2002" name="Nature">
        <title>The genome sequence of Schizosaccharomyces pombe.</title>
        <authorList>
            <person name="Wood V."/>
            <person name="Gwilliam R."/>
            <person name="Rajandream M.A."/>
            <person name="Lyne M.H."/>
            <person name="Lyne R."/>
            <person name="Stewart A."/>
            <person name="Sgouros J.G."/>
            <person name="Peat N."/>
            <person name="Hayles J."/>
            <person name="Baker S.G."/>
            <person name="Basham D."/>
            <person name="Bowman S."/>
            <person name="Brooks K."/>
            <person name="Brown D."/>
            <person name="Brown S."/>
            <person name="Chillingworth T."/>
            <person name="Churcher C.M."/>
            <person name="Collins M."/>
            <person name="Connor R."/>
            <person name="Cronin A."/>
            <person name="Davis P."/>
            <person name="Feltwell T."/>
            <person name="Fraser A."/>
            <person name="Gentles S."/>
            <person name="Goble A."/>
            <person name="Hamlin N."/>
            <person name="Harris D.E."/>
            <person name="Hidalgo J."/>
            <person name="Hodgson G."/>
            <person name="Holroyd S."/>
            <person name="Hornsby T."/>
            <person name="Howarth S."/>
            <person name="Huckle E.J."/>
            <person name="Hunt S."/>
            <person name="Jagels K."/>
            <person name="James K.D."/>
            <person name="Jones L."/>
            <person name="Jones M."/>
            <person name="Leather S."/>
            <person name="McDonald S."/>
            <person name="McLean J."/>
            <person name="Mooney P."/>
            <person name="Moule S."/>
            <person name="Mungall K.L."/>
            <person name="Murphy L.D."/>
            <person name="Niblett D."/>
            <person name="Odell C."/>
            <person name="Oliver K."/>
            <person name="O'Neil S."/>
            <person name="Pearson D."/>
            <person name="Quail M.A."/>
            <person name="Rabbinowitsch E."/>
            <person name="Rutherford K.M."/>
            <person name="Rutter S."/>
            <person name="Saunders D."/>
            <person name="Seeger K."/>
            <person name="Sharp S."/>
            <person name="Skelton J."/>
            <person name="Simmonds M.N."/>
            <person name="Squares R."/>
            <person name="Squares S."/>
            <person name="Stevens K."/>
            <person name="Taylor K."/>
            <person name="Taylor R.G."/>
            <person name="Tivey A."/>
            <person name="Walsh S.V."/>
            <person name="Warren T."/>
            <person name="Whitehead S."/>
            <person name="Woodward J.R."/>
            <person name="Volckaert G."/>
            <person name="Aert R."/>
            <person name="Robben J."/>
            <person name="Grymonprez B."/>
            <person name="Weltjens I."/>
            <person name="Vanstreels E."/>
            <person name="Rieger M."/>
            <person name="Schaefer M."/>
            <person name="Mueller-Auer S."/>
            <person name="Gabel C."/>
            <person name="Fuchs M."/>
            <person name="Duesterhoeft A."/>
            <person name="Fritzc C."/>
            <person name="Holzer E."/>
            <person name="Moestl D."/>
            <person name="Hilbert H."/>
            <person name="Borzym K."/>
            <person name="Langer I."/>
            <person name="Beck A."/>
            <person name="Lehrach H."/>
            <person name="Reinhardt R."/>
            <person name="Pohl T.M."/>
            <person name="Eger P."/>
            <person name="Zimmermann W."/>
            <person name="Wedler H."/>
            <person name="Wambutt R."/>
            <person name="Purnelle B."/>
            <person name="Goffeau A."/>
            <person name="Cadieu E."/>
            <person name="Dreano S."/>
            <person name="Gloux S."/>
            <person name="Lelaure V."/>
            <person name="Mottier S."/>
            <person name="Galibert F."/>
            <person name="Aves S.J."/>
            <person name="Xiang Z."/>
            <person name="Hunt C."/>
            <person name="Moore K."/>
            <person name="Hurst S.M."/>
            <person name="Lucas M."/>
            <person name="Rochet M."/>
            <person name="Gaillardin C."/>
            <person name="Tallada V.A."/>
            <person name="Garzon A."/>
            <person name="Thode G."/>
            <person name="Daga R.R."/>
            <person name="Cruzado L."/>
            <person name="Jimenez J."/>
            <person name="Sanchez M."/>
            <person name="del Rey F."/>
            <person name="Benito J."/>
            <person name="Dominguez A."/>
            <person name="Revuelta J.L."/>
            <person name="Moreno S."/>
            <person name="Armstrong J."/>
            <person name="Forsburg S.L."/>
            <person name="Cerutti L."/>
            <person name="Lowe T."/>
            <person name="McCombie W.R."/>
            <person name="Paulsen I."/>
            <person name="Potashkin J."/>
            <person name="Shpakovski G.V."/>
            <person name="Ussery D."/>
            <person name="Barrell B.G."/>
            <person name="Nurse P."/>
        </authorList>
    </citation>
    <scope>NUCLEOTIDE SEQUENCE [LARGE SCALE GENOMIC DNA]</scope>
    <source>
        <strain>972 / ATCC 24843</strain>
    </source>
</reference>
<reference key="2">
    <citation type="journal article" date="2004" name="Cell">
        <title>Mis16 and Mis18 are required for CENP-A loading and histone deacetylation at centromeres.</title>
        <authorList>
            <person name="Hayashi T."/>
            <person name="Fujita Y."/>
            <person name="Iwasaki O."/>
            <person name="Adachi Y."/>
            <person name="Takahashi K."/>
            <person name="Yanagida M."/>
        </authorList>
    </citation>
    <scope>FUNCTION</scope>
    <scope>INTERACTION WITH MIS6 AND MIS15</scope>
    <scope>SUBCELLULAR LOCATION</scope>
</reference>
<reference key="3">
    <citation type="journal article" date="2005" name="EMBO J.">
        <title>Molecular analysis of kinetochore architecture in fission yeast.</title>
        <authorList>
            <person name="Liu X."/>
            <person name="McLeod I."/>
            <person name="Anderson S."/>
            <person name="Yates J.R. III"/>
            <person name="He X."/>
        </authorList>
    </citation>
    <scope>FUNCTION</scope>
    <scope>IDENTIFICATION IN THE SIM4 COMPLEX</scope>
</reference>
<reference key="4">
    <citation type="journal article" date="2006" name="Nat. Biotechnol.">
        <title>ORFeome cloning and global analysis of protein localization in the fission yeast Schizosaccharomyces pombe.</title>
        <authorList>
            <person name="Matsuyama A."/>
            <person name="Arai R."/>
            <person name="Yashiroda Y."/>
            <person name="Shirai A."/>
            <person name="Kamata A."/>
            <person name="Sekido S."/>
            <person name="Kobayashi Y."/>
            <person name="Hashimoto A."/>
            <person name="Hamamoto M."/>
            <person name="Hiraoka Y."/>
            <person name="Horinouchi S."/>
            <person name="Yoshida M."/>
        </authorList>
    </citation>
    <scope>SUBCELLULAR LOCATION [LARGE SCALE ANALYSIS]</scope>
</reference>
<feature type="chain" id="PRO_0000116523" description="Inner kinetochore subunit mis17">
    <location>
        <begin position="1"/>
        <end position="441"/>
    </location>
</feature>
<feature type="region of interest" description="Disordered" evidence="2">
    <location>
        <begin position="160"/>
        <end position="240"/>
    </location>
</feature>
<feature type="compositionally biased region" description="Polar residues" evidence="2">
    <location>
        <begin position="160"/>
        <end position="173"/>
    </location>
</feature>
<feature type="compositionally biased region" description="Low complexity" evidence="2">
    <location>
        <begin position="174"/>
        <end position="183"/>
    </location>
</feature>
<feature type="compositionally biased region" description="Polar residues" evidence="2">
    <location>
        <begin position="192"/>
        <end position="201"/>
    </location>
</feature>
<feature type="compositionally biased region" description="Low complexity" evidence="2">
    <location>
        <begin position="217"/>
        <end position="233"/>
    </location>
</feature>
<dbReference type="EMBL" id="CU329671">
    <property type="protein sequence ID" value="CAD56489.2"/>
    <property type="molecule type" value="Genomic_DNA"/>
</dbReference>
<dbReference type="PIR" id="T39883">
    <property type="entry name" value="T39883"/>
</dbReference>
<dbReference type="RefSeq" id="NP_001018835.1">
    <property type="nucleotide sequence ID" value="NM_001022256.2"/>
</dbReference>
<dbReference type="SMR" id="O94643"/>
<dbReference type="BioGRID" id="280403">
    <property type="interactions" value="33"/>
</dbReference>
<dbReference type="FunCoup" id="O94643">
    <property type="interactions" value="2"/>
</dbReference>
<dbReference type="IntAct" id="O94643">
    <property type="interactions" value="2"/>
</dbReference>
<dbReference type="STRING" id="284812.O94643"/>
<dbReference type="iPTMnet" id="O94643"/>
<dbReference type="PaxDb" id="4896-SPBC21.01.1"/>
<dbReference type="EnsemblFungi" id="SPBC21.01.1">
    <property type="protein sequence ID" value="SPBC21.01.1:pep"/>
    <property type="gene ID" value="SPBC21.01"/>
</dbReference>
<dbReference type="GeneID" id="3361327"/>
<dbReference type="KEGG" id="spo:3361327"/>
<dbReference type="PomBase" id="SPBC21.01">
    <property type="gene designation" value="mis17"/>
</dbReference>
<dbReference type="VEuPathDB" id="FungiDB:SPBC21.01"/>
<dbReference type="eggNOG" id="ENOG502R7H1">
    <property type="taxonomic scope" value="Eukaryota"/>
</dbReference>
<dbReference type="HOGENOM" id="CLU_621357_0_0_1"/>
<dbReference type="InParanoid" id="O94643"/>
<dbReference type="OMA" id="KFDVIQQ"/>
<dbReference type="PRO" id="PR:O94643"/>
<dbReference type="Proteomes" id="UP000002485">
    <property type="component" value="Chromosome II"/>
</dbReference>
<dbReference type="GO" id="GO:0000776">
    <property type="term" value="C:kinetochore"/>
    <property type="evidence" value="ECO:0000314"/>
    <property type="project" value="PomBase"/>
</dbReference>
<dbReference type="GO" id="GO:0031511">
    <property type="term" value="C:Mis6-Sim4 complex"/>
    <property type="evidence" value="ECO:0000314"/>
    <property type="project" value="PomBase"/>
</dbReference>
<dbReference type="GO" id="GO:0005634">
    <property type="term" value="C:nucleus"/>
    <property type="evidence" value="ECO:0007005"/>
    <property type="project" value="PomBase"/>
</dbReference>
<dbReference type="GO" id="GO:0051301">
    <property type="term" value="P:cell division"/>
    <property type="evidence" value="ECO:0007669"/>
    <property type="project" value="UniProtKB-KW"/>
</dbReference>
<dbReference type="GO" id="GO:0034080">
    <property type="term" value="P:CENP-A containing chromatin assembly"/>
    <property type="evidence" value="ECO:0000315"/>
    <property type="project" value="PomBase"/>
</dbReference>
<dbReference type="GO" id="GO:0000070">
    <property type="term" value="P:mitotic sister chromatid segregation"/>
    <property type="evidence" value="ECO:0000315"/>
    <property type="project" value="PomBase"/>
</dbReference>
<dbReference type="InterPro" id="IPR048743">
    <property type="entry name" value="AME1"/>
</dbReference>
<dbReference type="Pfam" id="PF20994">
    <property type="entry name" value="CENPU"/>
    <property type="match status" value="1"/>
</dbReference>
<comment type="function">
    <text evidence="3 4">Component of the kinetochore, a multiprotein complex that assembles on centromeric DNA and attaches chromosomes to spindle microtubules, mediating chromosome segregation and sister chromatid segregation during meiosis and mitosis. Component of the inner kinetochore COMA complex, which connects centromere-associated proteins and the outer kinetochore. COMA interacts with other inner kinetochore proteins to form the inner kinetochore constitutive centromere-associated network (CCAN), which serves as a structural platform for outer kinetochore assembly.</text>
</comment>
<comment type="subunit">
    <text evidence="1 3 4">Component of the heterotetrameric kinetochore subcomplex COMA, which consists of fta2, fta7, mal2 and mis17 (By similarity). The COMA subcomplex is part of a larger constitutive centromere-associated network (CCAN) (also known as central kinetochore Sim4 complex in fission yeast), which is composed of at least cnl2, cnp3, cnp20, fta1, fta2, fta3, fta4, fta6, fta7, mal2, mhf1, mhf2, mis6, mis15, mis17, sim4 and wip1 (PubMed:15369671, PubMed:16079914). Interacts with mis6 and mis15 (PubMed:15369671).</text>
</comment>
<comment type="subcellular location">
    <subcellularLocation>
        <location>Nucleus</location>
    </subcellularLocation>
    <subcellularLocation>
        <location>Chromosome</location>
        <location>Centromere</location>
    </subcellularLocation>
    <subcellularLocation>
        <location>Chromosome</location>
        <location>Centromere</location>
        <location>Kinetochore</location>
    </subcellularLocation>
</comment>
<comment type="similarity">
    <text evidence="5">Belongs to the CENP-U/AME1 family.</text>
</comment>
<gene>
    <name type="primary">mis17</name>
    <name type="ORF">SPBC21.01</name>
    <name type="ORF">SPBC776.19</name>
</gene>
<protein>
    <recommendedName>
        <fullName>Inner kinetochore subunit mis17</fullName>
    </recommendedName>
    <alternativeName>
        <fullName>CENP-U homolog</fullName>
    </alternativeName>
    <alternativeName>
        <fullName>Constitutive centromere-associated network protein mis17</fullName>
    </alternativeName>
    <alternativeName>
        <fullName>Sim4 complex subunit mis17</fullName>
    </alternativeName>
</protein>